<organism>
    <name type="scientific">Prochlorococcus marinus (strain MIT 9215)</name>
    <dbReference type="NCBI Taxonomy" id="93060"/>
    <lineage>
        <taxon>Bacteria</taxon>
        <taxon>Bacillati</taxon>
        <taxon>Cyanobacteriota</taxon>
        <taxon>Cyanophyceae</taxon>
        <taxon>Synechococcales</taxon>
        <taxon>Prochlorococcaceae</taxon>
        <taxon>Prochlorococcus</taxon>
    </lineage>
</organism>
<keyword id="KW-0687">Ribonucleoprotein</keyword>
<keyword id="KW-0689">Ribosomal protein</keyword>
<sequence>MSRVCELTGAKANNGMAVSHSHIRTKKLQQVNLQKRRLWWEEGKKWVNIKISTKALKSIQKVGLDKFAKSNGVDLQKF</sequence>
<comment type="similarity">
    <text evidence="1">Belongs to the bacterial ribosomal protein bL28 family.</text>
</comment>
<protein>
    <recommendedName>
        <fullName evidence="1">Large ribosomal subunit protein bL28</fullName>
    </recommendedName>
    <alternativeName>
        <fullName evidence="2">50S ribosomal protein L28</fullName>
    </alternativeName>
</protein>
<dbReference type="EMBL" id="CP000825">
    <property type="protein sequence ID" value="ABV50605.1"/>
    <property type="molecule type" value="Genomic_DNA"/>
</dbReference>
<dbReference type="RefSeq" id="WP_012007692.1">
    <property type="nucleotide sequence ID" value="NC_009840.1"/>
</dbReference>
<dbReference type="SMR" id="A8G4S4"/>
<dbReference type="STRING" id="93060.P9215_09901"/>
<dbReference type="KEGG" id="pmh:P9215_09901"/>
<dbReference type="eggNOG" id="COG0227">
    <property type="taxonomic scope" value="Bacteria"/>
</dbReference>
<dbReference type="HOGENOM" id="CLU_064548_3_0_3"/>
<dbReference type="OrthoDB" id="9805609at2"/>
<dbReference type="Proteomes" id="UP000002014">
    <property type="component" value="Chromosome"/>
</dbReference>
<dbReference type="GO" id="GO:1990904">
    <property type="term" value="C:ribonucleoprotein complex"/>
    <property type="evidence" value="ECO:0007669"/>
    <property type="project" value="UniProtKB-KW"/>
</dbReference>
<dbReference type="GO" id="GO:0005840">
    <property type="term" value="C:ribosome"/>
    <property type="evidence" value="ECO:0007669"/>
    <property type="project" value="UniProtKB-KW"/>
</dbReference>
<dbReference type="GO" id="GO:0003735">
    <property type="term" value="F:structural constituent of ribosome"/>
    <property type="evidence" value="ECO:0007669"/>
    <property type="project" value="InterPro"/>
</dbReference>
<dbReference type="GO" id="GO:0006412">
    <property type="term" value="P:translation"/>
    <property type="evidence" value="ECO:0007669"/>
    <property type="project" value="UniProtKB-UniRule"/>
</dbReference>
<dbReference type="Gene3D" id="2.30.170.40">
    <property type="entry name" value="Ribosomal protein L28/L24"/>
    <property type="match status" value="1"/>
</dbReference>
<dbReference type="HAMAP" id="MF_00373">
    <property type="entry name" value="Ribosomal_bL28"/>
    <property type="match status" value="1"/>
</dbReference>
<dbReference type="InterPro" id="IPR026569">
    <property type="entry name" value="Ribosomal_bL28"/>
</dbReference>
<dbReference type="InterPro" id="IPR034704">
    <property type="entry name" value="Ribosomal_bL28/bL31-like_sf"/>
</dbReference>
<dbReference type="InterPro" id="IPR001383">
    <property type="entry name" value="Ribosomal_bL28_bact-type"/>
</dbReference>
<dbReference type="InterPro" id="IPR037147">
    <property type="entry name" value="Ribosomal_bL28_sf"/>
</dbReference>
<dbReference type="NCBIfam" id="TIGR00009">
    <property type="entry name" value="L28"/>
    <property type="match status" value="1"/>
</dbReference>
<dbReference type="PANTHER" id="PTHR13528">
    <property type="entry name" value="39S RIBOSOMAL PROTEIN L28, MITOCHONDRIAL"/>
    <property type="match status" value="1"/>
</dbReference>
<dbReference type="PANTHER" id="PTHR13528:SF2">
    <property type="entry name" value="LARGE RIBOSOMAL SUBUNIT PROTEIN BL28M"/>
    <property type="match status" value="1"/>
</dbReference>
<dbReference type="Pfam" id="PF00830">
    <property type="entry name" value="Ribosomal_L28"/>
    <property type="match status" value="1"/>
</dbReference>
<dbReference type="SUPFAM" id="SSF143800">
    <property type="entry name" value="L28p-like"/>
    <property type="match status" value="1"/>
</dbReference>
<proteinExistence type="inferred from homology"/>
<feature type="chain" id="PRO_1000059955" description="Large ribosomal subunit protein bL28">
    <location>
        <begin position="1"/>
        <end position="78"/>
    </location>
</feature>
<gene>
    <name evidence="1" type="primary">rpmB</name>
    <name evidence="1" type="synonym">rpl28</name>
    <name type="ordered locus">P9215_09901</name>
</gene>
<evidence type="ECO:0000255" key="1">
    <source>
        <dbReference type="HAMAP-Rule" id="MF_00373"/>
    </source>
</evidence>
<evidence type="ECO:0000305" key="2"/>
<accession>A8G4S4</accession>
<reference key="1">
    <citation type="journal article" date="2007" name="PLoS Genet.">
        <title>Patterns and implications of gene gain and loss in the evolution of Prochlorococcus.</title>
        <authorList>
            <person name="Kettler G.C."/>
            <person name="Martiny A.C."/>
            <person name="Huang K."/>
            <person name="Zucker J."/>
            <person name="Coleman M.L."/>
            <person name="Rodrigue S."/>
            <person name="Chen F."/>
            <person name="Lapidus A."/>
            <person name="Ferriera S."/>
            <person name="Johnson J."/>
            <person name="Steglich C."/>
            <person name="Church G.M."/>
            <person name="Richardson P."/>
            <person name="Chisholm S.W."/>
        </authorList>
    </citation>
    <scope>NUCLEOTIDE SEQUENCE [LARGE SCALE GENOMIC DNA]</scope>
    <source>
        <strain>MIT 9215</strain>
    </source>
</reference>
<name>RL28_PROM2</name>